<keyword id="KW-0997">Cell inner membrane</keyword>
<keyword id="KW-1003">Cell membrane</keyword>
<keyword id="KW-0350">Heme biosynthesis</keyword>
<keyword id="KW-0472">Membrane</keyword>
<keyword id="KW-1185">Reference proteome</keyword>
<keyword id="KW-0808">Transferase</keyword>
<keyword id="KW-0812">Transmembrane</keyword>
<keyword id="KW-1133">Transmembrane helix</keyword>
<feature type="chain" id="PRO_0000326885" description="Protoheme IX farnesyltransferase">
    <location>
        <begin position="1"/>
        <end position="294"/>
    </location>
</feature>
<feature type="transmembrane region" description="Helical" evidence="1">
    <location>
        <begin position="8"/>
        <end position="28"/>
    </location>
</feature>
<feature type="transmembrane region" description="Helical" evidence="1">
    <location>
        <begin position="35"/>
        <end position="55"/>
    </location>
</feature>
<feature type="transmembrane region" description="Helical" evidence="1">
    <location>
        <begin position="81"/>
        <end position="101"/>
    </location>
</feature>
<feature type="transmembrane region" description="Helical" evidence="1">
    <location>
        <begin position="107"/>
        <end position="127"/>
    </location>
</feature>
<feature type="transmembrane region" description="Helical" evidence="1">
    <location>
        <begin position="133"/>
        <end position="153"/>
    </location>
</feature>
<feature type="transmembrane region" description="Helical" evidence="1">
    <location>
        <begin position="163"/>
        <end position="183"/>
    </location>
</feature>
<feature type="transmembrane region" description="Helical" evidence="1">
    <location>
        <begin position="209"/>
        <end position="226"/>
    </location>
</feature>
<feature type="transmembrane region" description="Helical" evidence="1">
    <location>
        <begin position="230"/>
        <end position="252"/>
    </location>
</feature>
<feature type="transmembrane region" description="Helical" evidence="1">
    <location>
        <begin position="266"/>
        <end position="286"/>
    </location>
</feature>
<sequence length="294" mass="33110">MIKYYLYLTKPGIVLGNLMSSAGGFLIASRGAISYSLFITMIVGTALVIASGCVLNNIIDRDIDAVMERTKHRVLVQHGQIFLNQSIFYAVILSIFGFLFLSFTKNVLTIYLSAIGLFIYVGVYSLWMKRRSIYSIMVGSISGAMPPVIGYCAAANQFDAGALMLLIIFSLWQIPHSHSIAILRLNDYKVAFIPTFPIKKGVESTKNHMVVYIIGFIIATILFTVMGYTSYIFLIIISIMNLWWLHMGFYGYRIINHDSLWAKKMFLLSLIIIISLNLLLSLDHILFSTKNILL</sequence>
<comment type="function">
    <text evidence="1">Converts heme B (protoheme IX) to heme O by substitution of the vinyl group on carbon 2 of heme B porphyrin ring with a hydroxyethyl farnesyl side group.</text>
</comment>
<comment type="catalytic activity">
    <reaction evidence="1">
        <text>heme b + (2E,6E)-farnesyl diphosphate + H2O = Fe(II)-heme o + diphosphate</text>
        <dbReference type="Rhea" id="RHEA:28070"/>
        <dbReference type="ChEBI" id="CHEBI:15377"/>
        <dbReference type="ChEBI" id="CHEBI:33019"/>
        <dbReference type="ChEBI" id="CHEBI:60344"/>
        <dbReference type="ChEBI" id="CHEBI:60530"/>
        <dbReference type="ChEBI" id="CHEBI:175763"/>
        <dbReference type="EC" id="2.5.1.141"/>
    </reaction>
</comment>
<comment type="pathway">
    <text evidence="1">Porphyrin-containing compound metabolism; heme O biosynthesis; heme O from protoheme: step 1/1.</text>
</comment>
<comment type="subcellular location">
    <subcellularLocation>
        <location evidence="1">Cell inner membrane</location>
        <topology evidence="1">Multi-pass membrane protein</topology>
    </subcellularLocation>
</comment>
<comment type="miscellaneous">
    <text evidence="1">Carbon 2 of the heme B porphyrin ring is defined according to the Fischer nomenclature.</text>
</comment>
<comment type="similarity">
    <text evidence="1">Belongs to the UbiA prenyltransferase family. Protoheme IX farnesyltransferase subfamily.</text>
</comment>
<organism>
    <name type="scientific">Blochmanniella pennsylvanica (strain BPEN)</name>
    <dbReference type="NCBI Taxonomy" id="291272"/>
    <lineage>
        <taxon>Bacteria</taxon>
        <taxon>Pseudomonadati</taxon>
        <taxon>Pseudomonadota</taxon>
        <taxon>Gammaproteobacteria</taxon>
        <taxon>Enterobacterales</taxon>
        <taxon>Enterobacteriaceae</taxon>
        <taxon>ant endosymbionts</taxon>
        <taxon>Candidatus Blochmanniella</taxon>
    </lineage>
</organism>
<gene>
    <name evidence="1" type="primary">cyoE</name>
    <name type="ordered locus">BPEN_248</name>
</gene>
<reference key="1">
    <citation type="journal article" date="2005" name="Genome Res.">
        <title>Genome sequence of Blochmannia pennsylvanicus indicates parallel evolutionary trends among bacterial mutualists of insects.</title>
        <authorList>
            <person name="Degnan P.H."/>
            <person name="Lazarus A.B."/>
            <person name="Wernegreen J.J."/>
        </authorList>
    </citation>
    <scope>NUCLEOTIDE SEQUENCE [LARGE SCALE GENOMIC DNA]</scope>
    <source>
        <strain>BPEN</strain>
    </source>
</reference>
<evidence type="ECO:0000255" key="1">
    <source>
        <dbReference type="HAMAP-Rule" id="MF_00154"/>
    </source>
</evidence>
<name>CYOE_BLOPB</name>
<dbReference type="EC" id="2.5.1.141" evidence="1"/>
<dbReference type="EMBL" id="CP000016">
    <property type="protein sequence ID" value="AAZ40879.1"/>
    <property type="molecule type" value="Genomic_DNA"/>
</dbReference>
<dbReference type="RefSeq" id="WP_011282786.1">
    <property type="nucleotide sequence ID" value="NC_007292.1"/>
</dbReference>
<dbReference type="SMR" id="Q493G3"/>
<dbReference type="STRING" id="291272.BPEN_248"/>
<dbReference type="KEGG" id="bpn:BPEN_248"/>
<dbReference type="eggNOG" id="COG0109">
    <property type="taxonomic scope" value="Bacteria"/>
</dbReference>
<dbReference type="HOGENOM" id="CLU_029631_0_0_6"/>
<dbReference type="OrthoDB" id="9814417at2"/>
<dbReference type="UniPathway" id="UPA00834">
    <property type="reaction ID" value="UER00712"/>
</dbReference>
<dbReference type="Proteomes" id="UP000007794">
    <property type="component" value="Chromosome"/>
</dbReference>
<dbReference type="GO" id="GO:0005886">
    <property type="term" value="C:plasma membrane"/>
    <property type="evidence" value="ECO:0007669"/>
    <property type="project" value="UniProtKB-SubCell"/>
</dbReference>
<dbReference type="GO" id="GO:0008495">
    <property type="term" value="F:protoheme IX farnesyltransferase activity"/>
    <property type="evidence" value="ECO:0007669"/>
    <property type="project" value="UniProtKB-UniRule"/>
</dbReference>
<dbReference type="GO" id="GO:0048034">
    <property type="term" value="P:heme O biosynthetic process"/>
    <property type="evidence" value="ECO:0007669"/>
    <property type="project" value="UniProtKB-UniRule"/>
</dbReference>
<dbReference type="CDD" id="cd13957">
    <property type="entry name" value="PT_UbiA_Cox10"/>
    <property type="match status" value="1"/>
</dbReference>
<dbReference type="FunFam" id="1.10.357.140:FF:000001">
    <property type="entry name" value="Protoheme IX farnesyltransferase"/>
    <property type="match status" value="1"/>
</dbReference>
<dbReference type="Gene3D" id="1.10.357.140">
    <property type="entry name" value="UbiA prenyltransferase"/>
    <property type="match status" value="1"/>
</dbReference>
<dbReference type="HAMAP" id="MF_00154">
    <property type="entry name" value="CyoE_CtaB"/>
    <property type="match status" value="1"/>
</dbReference>
<dbReference type="InterPro" id="IPR006369">
    <property type="entry name" value="Protohaem_IX_farnesylTrfase"/>
</dbReference>
<dbReference type="InterPro" id="IPR000537">
    <property type="entry name" value="UbiA_prenyltransferase"/>
</dbReference>
<dbReference type="InterPro" id="IPR044878">
    <property type="entry name" value="UbiA_sf"/>
</dbReference>
<dbReference type="NCBIfam" id="TIGR01473">
    <property type="entry name" value="cyoE_ctaB"/>
    <property type="match status" value="1"/>
</dbReference>
<dbReference type="NCBIfam" id="NF003348">
    <property type="entry name" value="PRK04375.1-1"/>
    <property type="match status" value="1"/>
</dbReference>
<dbReference type="PANTHER" id="PTHR43448">
    <property type="entry name" value="PROTOHEME IX FARNESYLTRANSFERASE, MITOCHONDRIAL"/>
    <property type="match status" value="1"/>
</dbReference>
<dbReference type="PANTHER" id="PTHR43448:SF2">
    <property type="entry name" value="PROTOHEME IX FARNESYLTRANSFERASE, MITOCHONDRIAL"/>
    <property type="match status" value="1"/>
</dbReference>
<dbReference type="Pfam" id="PF01040">
    <property type="entry name" value="UbiA"/>
    <property type="match status" value="1"/>
</dbReference>
<accession>Q493G3</accession>
<protein>
    <recommendedName>
        <fullName evidence="1">Protoheme IX farnesyltransferase</fullName>
        <ecNumber evidence="1">2.5.1.141</ecNumber>
    </recommendedName>
    <alternativeName>
        <fullName evidence="1">Heme B farnesyltransferase</fullName>
    </alternativeName>
    <alternativeName>
        <fullName evidence="1">Heme O synthase</fullName>
    </alternativeName>
</protein>
<proteinExistence type="inferred from homology"/>